<organism>
    <name type="scientific">Syntrophus aciditrophicus (strain SB)</name>
    <dbReference type="NCBI Taxonomy" id="56780"/>
    <lineage>
        <taxon>Bacteria</taxon>
        <taxon>Pseudomonadati</taxon>
        <taxon>Thermodesulfobacteriota</taxon>
        <taxon>Syntrophia</taxon>
        <taxon>Syntrophales</taxon>
        <taxon>Syntrophaceae</taxon>
        <taxon>Syntrophus</taxon>
    </lineage>
</organism>
<dbReference type="EC" id="3.5.2.3" evidence="1"/>
<dbReference type="EMBL" id="CP000252">
    <property type="protein sequence ID" value="ABC78091.1"/>
    <property type="molecule type" value="Genomic_DNA"/>
</dbReference>
<dbReference type="RefSeq" id="WP_011418111.1">
    <property type="nucleotide sequence ID" value="NC_007759.1"/>
</dbReference>
<dbReference type="SMR" id="Q2LVI3"/>
<dbReference type="FunCoup" id="Q2LVI3">
    <property type="interactions" value="439"/>
</dbReference>
<dbReference type="STRING" id="56780.SYN_01533"/>
<dbReference type="KEGG" id="sat:SYN_01533"/>
<dbReference type="eggNOG" id="COG0044">
    <property type="taxonomic scope" value="Bacteria"/>
</dbReference>
<dbReference type="HOGENOM" id="CLU_015572_1_0_7"/>
<dbReference type="InParanoid" id="Q2LVI3"/>
<dbReference type="OrthoDB" id="9803027at2"/>
<dbReference type="UniPathway" id="UPA00070">
    <property type="reaction ID" value="UER00117"/>
</dbReference>
<dbReference type="Proteomes" id="UP000001933">
    <property type="component" value="Chromosome"/>
</dbReference>
<dbReference type="GO" id="GO:0005737">
    <property type="term" value="C:cytoplasm"/>
    <property type="evidence" value="ECO:0007669"/>
    <property type="project" value="TreeGrafter"/>
</dbReference>
<dbReference type="GO" id="GO:0004038">
    <property type="term" value="F:allantoinase activity"/>
    <property type="evidence" value="ECO:0007669"/>
    <property type="project" value="TreeGrafter"/>
</dbReference>
<dbReference type="GO" id="GO:0004151">
    <property type="term" value="F:dihydroorotase activity"/>
    <property type="evidence" value="ECO:0007669"/>
    <property type="project" value="UniProtKB-UniRule"/>
</dbReference>
<dbReference type="GO" id="GO:0008270">
    <property type="term" value="F:zinc ion binding"/>
    <property type="evidence" value="ECO:0007669"/>
    <property type="project" value="UniProtKB-UniRule"/>
</dbReference>
<dbReference type="GO" id="GO:0044205">
    <property type="term" value="P:'de novo' UMP biosynthetic process"/>
    <property type="evidence" value="ECO:0007669"/>
    <property type="project" value="UniProtKB-UniRule"/>
</dbReference>
<dbReference type="GO" id="GO:0006145">
    <property type="term" value="P:purine nucleobase catabolic process"/>
    <property type="evidence" value="ECO:0007669"/>
    <property type="project" value="TreeGrafter"/>
</dbReference>
<dbReference type="CDD" id="cd01317">
    <property type="entry name" value="DHOase_IIa"/>
    <property type="match status" value="1"/>
</dbReference>
<dbReference type="Gene3D" id="3.20.20.140">
    <property type="entry name" value="Metal-dependent hydrolases"/>
    <property type="match status" value="1"/>
</dbReference>
<dbReference type="Gene3D" id="2.30.40.10">
    <property type="entry name" value="Urease, subunit C, domain 1"/>
    <property type="match status" value="1"/>
</dbReference>
<dbReference type="HAMAP" id="MF_00220_B">
    <property type="entry name" value="PyrC_classI_B"/>
    <property type="match status" value="1"/>
</dbReference>
<dbReference type="InterPro" id="IPR006680">
    <property type="entry name" value="Amidohydro-rel"/>
</dbReference>
<dbReference type="InterPro" id="IPR004722">
    <property type="entry name" value="DHOase"/>
</dbReference>
<dbReference type="InterPro" id="IPR050138">
    <property type="entry name" value="DHOase/Allantoinase_Hydrolase"/>
</dbReference>
<dbReference type="InterPro" id="IPR002195">
    <property type="entry name" value="Dihydroorotase_CS"/>
</dbReference>
<dbReference type="InterPro" id="IPR011059">
    <property type="entry name" value="Metal-dep_hydrolase_composite"/>
</dbReference>
<dbReference type="InterPro" id="IPR032466">
    <property type="entry name" value="Metal_Hydrolase"/>
</dbReference>
<dbReference type="NCBIfam" id="TIGR00857">
    <property type="entry name" value="pyrC_multi"/>
    <property type="match status" value="1"/>
</dbReference>
<dbReference type="PANTHER" id="PTHR43668">
    <property type="entry name" value="ALLANTOINASE"/>
    <property type="match status" value="1"/>
</dbReference>
<dbReference type="PANTHER" id="PTHR43668:SF2">
    <property type="entry name" value="ALLANTOINASE"/>
    <property type="match status" value="1"/>
</dbReference>
<dbReference type="Pfam" id="PF01979">
    <property type="entry name" value="Amidohydro_1"/>
    <property type="match status" value="1"/>
</dbReference>
<dbReference type="SUPFAM" id="SSF51338">
    <property type="entry name" value="Composite domain of metallo-dependent hydrolases"/>
    <property type="match status" value="1"/>
</dbReference>
<dbReference type="SUPFAM" id="SSF51556">
    <property type="entry name" value="Metallo-dependent hydrolases"/>
    <property type="match status" value="1"/>
</dbReference>
<dbReference type="PROSITE" id="PS00483">
    <property type="entry name" value="DIHYDROOROTASE_2"/>
    <property type="match status" value="1"/>
</dbReference>
<name>PYRC_SYNAS</name>
<accession>Q2LVI3</accession>
<reference key="1">
    <citation type="journal article" date="2007" name="Proc. Natl. Acad. Sci. U.S.A.">
        <title>The genome of Syntrophus aciditrophicus: life at the thermodynamic limit of microbial growth.</title>
        <authorList>
            <person name="McInerney M.J."/>
            <person name="Rohlin L."/>
            <person name="Mouttaki H."/>
            <person name="Kim U."/>
            <person name="Krupp R.S."/>
            <person name="Rios-Hernandez L."/>
            <person name="Sieber J."/>
            <person name="Struchtemeyer C.G."/>
            <person name="Bhattacharyya A."/>
            <person name="Campbell J.W."/>
            <person name="Gunsalus R.P."/>
        </authorList>
    </citation>
    <scope>NUCLEOTIDE SEQUENCE [LARGE SCALE GENOMIC DNA]</scope>
    <source>
        <strain>SB</strain>
    </source>
</reference>
<comment type="function">
    <text evidence="1">Catalyzes the reversible cyclization of carbamoyl aspartate to dihydroorotate.</text>
</comment>
<comment type="catalytic activity">
    <reaction evidence="1">
        <text>(S)-dihydroorotate + H2O = N-carbamoyl-L-aspartate + H(+)</text>
        <dbReference type="Rhea" id="RHEA:24296"/>
        <dbReference type="ChEBI" id="CHEBI:15377"/>
        <dbReference type="ChEBI" id="CHEBI:15378"/>
        <dbReference type="ChEBI" id="CHEBI:30864"/>
        <dbReference type="ChEBI" id="CHEBI:32814"/>
        <dbReference type="EC" id="3.5.2.3"/>
    </reaction>
</comment>
<comment type="cofactor">
    <cofactor evidence="1">
        <name>Zn(2+)</name>
        <dbReference type="ChEBI" id="CHEBI:29105"/>
    </cofactor>
    <text evidence="1">Binds 2 Zn(2+) ions per subunit.</text>
</comment>
<comment type="pathway">
    <text evidence="1">Pyrimidine metabolism; UMP biosynthesis via de novo pathway; (S)-dihydroorotate from bicarbonate: step 3/3.</text>
</comment>
<comment type="similarity">
    <text evidence="1">Belongs to the metallo-dependent hydrolases superfamily. DHOase family. Class I DHOase subfamily.</text>
</comment>
<gene>
    <name evidence="1" type="primary">pyrC</name>
    <name type="ordered locus">SYNAS_22120</name>
    <name type="ORF">SYN_01533</name>
</gene>
<protein>
    <recommendedName>
        <fullName evidence="1">Dihydroorotase</fullName>
        <shortName evidence="1">DHOase</shortName>
        <ecNumber evidence="1">3.5.2.3</ecNumber>
    </recommendedName>
</protein>
<keyword id="KW-0378">Hydrolase</keyword>
<keyword id="KW-0479">Metal-binding</keyword>
<keyword id="KW-0665">Pyrimidine biosynthesis</keyword>
<keyword id="KW-1185">Reference proteome</keyword>
<keyword id="KW-0862">Zinc</keyword>
<feature type="chain" id="PRO_1000024098" description="Dihydroorotase">
    <location>
        <begin position="1"/>
        <end position="426"/>
    </location>
</feature>
<feature type="active site" evidence="1">
    <location>
        <position position="307"/>
    </location>
</feature>
<feature type="binding site" evidence="1">
    <location>
        <position position="62"/>
    </location>
    <ligand>
        <name>Zn(2+)</name>
        <dbReference type="ChEBI" id="CHEBI:29105"/>
        <label>1</label>
    </ligand>
</feature>
<feature type="binding site" evidence="1">
    <location>
        <begin position="64"/>
        <end position="66"/>
    </location>
    <ligand>
        <name>substrate</name>
    </ligand>
</feature>
<feature type="binding site" evidence="1">
    <location>
        <position position="64"/>
    </location>
    <ligand>
        <name>Zn(2+)</name>
        <dbReference type="ChEBI" id="CHEBI:29105"/>
        <label>1</label>
    </ligand>
</feature>
<feature type="binding site" evidence="1">
    <location>
        <position position="96"/>
    </location>
    <ligand>
        <name>substrate</name>
    </ligand>
</feature>
<feature type="binding site" evidence="1">
    <location>
        <position position="154"/>
    </location>
    <ligand>
        <name>Zn(2+)</name>
        <dbReference type="ChEBI" id="CHEBI:29105"/>
        <label>1</label>
    </ligand>
</feature>
<feature type="binding site" evidence="1">
    <location>
        <position position="154"/>
    </location>
    <ligand>
        <name>Zn(2+)</name>
        <dbReference type="ChEBI" id="CHEBI:29105"/>
        <label>2</label>
    </ligand>
</feature>
<feature type="binding site" evidence="1">
    <location>
        <position position="181"/>
    </location>
    <ligand>
        <name>Zn(2+)</name>
        <dbReference type="ChEBI" id="CHEBI:29105"/>
        <label>2</label>
    </ligand>
</feature>
<feature type="binding site" evidence="1">
    <location>
        <position position="234"/>
    </location>
    <ligand>
        <name>Zn(2+)</name>
        <dbReference type="ChEBI" id="CHEBI:29105"/>
        <label>2</label>
    </ligand>
</feature>
<feature type="binding site" evidence="1">
    <location>
        <position position="307"/>
    </location>
    <ligand>
        <name>Zn(2+)</name>
        <dbReference type="ChEBI" id="CHEBI:29105"/>
        <label>1</label>
    </ligand>
</feature>
<feature type="binding site" evidence="1">
    <location>
        <position position="311"/>
    </location>
    <ligand>
        <name>substrate</name>
    </ligand>
</feature>
<evidence type="ECO:0000255" key="1">
    <source>
        <dbReference type="HAMAP-Rule" id="MF_00220"/>
    </source>
</evidence>
<proteinExistence type="inferred from homology"/>
<sequence>MKILLKGGRVIDPAQNLDGQMDLLLENGKIAAIAEAVGSVPEDTRLLDLKGMILLPGLVDMHTHLREPGYEYKETIRSGSEAAAVGGFTSIACMPNTLPVNDNRTVTEYILKRAKECDTVHVYPVAAVSRNSEGKILAEFGDLKEAGAIAFSDDGKPVMNSILMRRALEYASSLDRIIISHCEDLNLSAGGLMNEGKISTELGLPGIPTLAEDVMVARDLLLAEFSGAALHIAHVSSAGAVRMIRDAKKRGVRVTAETTPHYFTLTDEAVTNFNTNTKVSPPLRSREDLQAVREGLRDGTLDAIVTDHAPHALTDKEVEFEYAANGISGLETALALSLTLVDDGLLTLSELVRKMSVNPAKILNIPKGTLRPGADADITVLNPGKTWVVDPSNWRSQGKNTPFFGWTLKGKVIMTLVQGRIVYQED</sequence>